<protein>
    <recommendedName>
        <fullName>Uroplakin-2</fullName>
        <shortName>UP2</shortName>
    </recommendedName>
    <alternativeName>
        <fullName>Uroplakin II</fullName>
        <shortName>UPII</shortName>
    </alternativeName>
</protein>
<comment type="function">
    <text>Component of the asymmetric unit membrane (AUM); a highly specialized biomembrane elaborated by terminally differentiated urothelial cells. May play an important role in regulating the assembly of the AUM.</text>
</comment>
<comment type="subunit">
    <text evidence="2">Interacts with uroplakin-1a (UPK1A).</text>
</comment>
<comment type="subcellular location">
    <subcellularLocation>
        <location evidence="3">Cell membrane</location>
        <topology evidence="3">Single-pass type I membrane protein</topology>
    </subcellularLocation>
    <text evidence="2">Heterodimer formation with UPK1A is a prerequisite to exit out of the endoplasmic reticulum (ER).</text>
</comment>
<comment type="tissue specificity">
    <text>Bladder epithelium.</text>
</comment>
<comment type="similarity">
    <text evidence="3">Belongs to the uroplakin-2 family.</text>
</comment>
<reference key="1">
    <citation type="journal article" date="1994" name="J. Biol. Chem.">
        <title>Precursor sequence, processing, and urothelium-specific expression of a major 15-kDa protein subunit of asymmetric unit membrane.</title>
        <authorList>
            <person name="Lin J.-H."/>
            <person name="Wu X.-R."/>
            <person name="Kreibich G."/>
            <person name="Sun T.-T."/>
        </authorList>
    </citation>
    <scope>NUCLEOTIDE SEQUENCE [MRNA]</scope>
    <scope>PARTIAL PROTEIN SEQUENCE</scope>
    <source>
        <tissue>Urinary bladder urothelium</tissue>
    </source>
</reference>
<reference key="2">
    <citation type="journal article" date="2002" name="Mol. Biol. Cell">
        <title>Specific heterodimer formation is a prerequisite for uroplakins to exit from the endoplasmic reticulum.</title>
        <authorList>
            <person name="Tu L."/>
            <person name="Sun T.-T."/>
            <person name="Kreibich G."/>
        </authorList>
    </citation>
    <scope>SUBCELLULAR LOCATION</scope>
    <scope>INTERACTION WITH UPK1A</scope>
</reference>
<feature type="signal peptide" evidence="1">
    <location>
        <begin position="1"/>
        <end position="26"/>
    </location>
</feature>
<feature type="propeptide" id="PRO_0000022628">
    <location>
        <begin position="27"/>
        <end position="85"/>
    </location>
</feature>
<feature type="chain" id="PRO_0000022629" description="Uroplakin-2">
    <location>
        <begin position="86"/>
        <end position="185"/>
    </location>
</feature>
<feature type="topological domain" description="Lumenal" evidence="1">
    <location>
        <begin position="86"/>
        <end position="156"/>
    </location>
</feature>
<feature type="transmembrane region" description="Helical" evidence="1">
    <location>
        <begin position="157"/>
        <end position="177"/>
    </location>
</feature>
<feature type="topological domain" description="Cytoplasmic" evidence="1">
    <location>
        <begin position="178"/>
        <end position="185"/>
    </location>
</feature>
<feature type="glycosylation site" description="N-linked (GlcNAc...) asparagine" evidence="1">
    <location>
        <position position="29"/>
    </location>
</feature>
<feature type="glycosylation site" description="N-linked (GlcNAc...) asparagine" evidence="1">
    <location>
        <position position="58"/>
    </location>
</feature>
<feature type="glycosylation site" description="N-linked (GlcNAc...) asparagine" evidence="1">
    <location>
        <position position="67"/>
    </location>
</feature>
<sequence length="185" mass="19619">MASPWPVWTLSWILILLAVLVPGAAADFNISSLSGLLSPVMTESLLVALPPCHLTGGNATLTVRRANDSKVVRSSFVVPPCRGRRELVSVVDSGSGFTVTRLSAYQVTNLAPGTKYYISYLVTKGASTESSREIPMSTFPRRKAESIGLAMARTGGMVVITVLLSVAMFLLVLGLIIALALGARK</sequence>
<accession>Q08537</accession>
<proteinExistence type="evidence at protein level"/>
<dbReference type="EMBL" id="L20633">
    <property type="protein sequence ID" value="AAC37317.1"/>
    <property type="molecule type" value="mRNA"/>
</dbReference>
<dbReference type="PIR" id="A49713">
    <property type="entry name" value="A49713"/>
</dbReference>
<dbReference type="RefSeq" id="NP_776639.1">
    <property type="nucleotide sequence ID" value="NM_174214.2"/>
</dbReference>
<dbReference type="RefSeq" id="XP_010810719.1">
    <property type="nucleotide sequence ID" value="XM_010812417.4"/>
</dbReference>
<dbReference type="SMR" id="Q08537"/>
<dbReference type="FunCoup" id="Q08537">
    <property type="interactions" value="25"/>
</dbReference>
<dbReference type="STRING" id="9913.ENSBTAP00000016947"/>
<dbReference type="GlyCosmos" id="Q08537">
    <property type="glycosylation" value="3 sites, No reported glycans"/>
</dbReference>
<dbReference type="GlyGen" id="Q08537">
    <property type="glycosylation" value="3 sites"/>
</dbReference>
<dbReference type="PaxDb" id="9913-ENSBTAP00000016947"/>
<dbReference type="Ensembl" id="ENSBTAT00000016947.5">
    <property type="protein sequence ID" value="ENSBTAP00000016947.4"/>
    <property type="gene ID" value="ENSBTAG00000012750.5"/>
</dbReference>
<dbReference type="GeneID" id="281569"/>
<dbReference type="KEGG" id="bta:281569"/>
<dbReference type="CTD" id="7379"/>
<dbReference type="VEuPathDB" id="HostDB:ENSBTAG00000012750"/>
<dbReference type="VGNC" id="VGNC:36686">
    <property type="gene designation" value="UPK2"/>
</dbReference>
<dbReference type="eggNOG" id="KOG2294">
    <property type="taxonomic scope" value="Eukaryota"/>
</dbReference>
<dbReference type="GeneTree" id="ENSGT00390000006115"/>
<dbReference type="HOGENOM" id="CLU_126065_0_0_1"/>
<dbReference type="InParanoid" id="Q08537"/>
<dbReference type="OMA" id="SFMVPPC"/>
<dbReference type="OrthoDB" id="9947134at2759"/>
<dbReference type="TreeFam" id="TF337797"/>
<dbReference type="Proteomes" id="UP000009136">
    <property type="component" value="Chromosome 15"/>
</dbReference>
<dbReference type="Bgee" id="ENSBTAG00000012750">
    <property type="expression patterns" value="Expressed in urethra and 28 other cell types or tissues"/>
</dbReference>
<dbReference type="GO" id="GO:0016324">
    <property type="term" value="C:apical plasma membrane"/>
    <property type="evidence" value="ECO:0000318"/>
    <property type="project" value="GO_Central"/>
</dbReference>
<dbReference type="GO" id="GO:0120001">
    <property type="term" value="C:apical plasma membrane urothelial plaque"/>
    <property type="evidence" value="ECO:0000314"/>
    <property type="project" value="UniProtKB"/>
</dbReference>
<dbReference type="GO" id="GO:0005783">
    <property type="term" value="C:endoplasmic reticulum"/>
    <property type="evidence" value="ECO:0000314"/>
    <property type="project" value="UniProtKB"/>
</dbReference>
<dbReference type="GO" id="GO:0016020">
    <property type="term" value="C:membrane"/>
    <property type="evidence" value="ECO:0000314"/>
    <property type="project" value="UniProtKB"/>
</dbReference>
<dbReference type="GO" id="GO:0005886">
    <property type="term" value="C:plasma membrane"/>
    <property type="evidence" value="ECO:0000314"/>
    <property type="project" value="UniProtKB"/>
</dbReference>
<dbReference type="GO" id="GO:0032991">
    <property type="term" value="C:protein-containing complex"/>
    <property type="evidence" value="ECO:0000314"/>
    <property type="project" value="UniProtKB"/>
</dbReference>
<dbReference type="GO" id="GO:0005198">
    <property type="term" value="F:structural molecule activity"/>
    <property type="evidence" value="ECO:0000314"/>
    <property type="project" value="UniProtKB"/>
</dbReference>
<dbReference type="GO" id="GO:0030855">
    <property type="term" value="P:epithelial cell differentiation"/>
    <property type="evidence" value="ECO:0000318"/>
    <property type="project" value="GO_Central"/>
</dbReference>
<dbReference type="CDD" id="cd09967">
    <property type="entry name" value="UP_II"/>
    <property type="match status" value="1"/>
</dbReference>
<dbReference type="InterPro" id="IPR009952">
    <property type="entry name" value="Uroplakin-2"/>
</dbReference>
<dbReference type="PANTHER" id="PTHR17573">
    <property type="entry name" value="UROPLAKIN II"/>
    <property type="match status" value="1"/>
</dbReference>
<dbReference type="PANTHER" id="PTHR17573:SF0">
    <property type="entry name" value="UROPLAKIN-2"/>
    <property type="match status" value="1"/>
</dbReference>
<dbReference type="Pfam" id="PF07353">
    <property type="entry name" value="Uroplakin_II"/>
    <property type="match status" value="1"/>
</dbReference>
<dbReference type="PIRSF" id="PIRSF016439">
    <property type="entry name" value="Uroplakin_II"/>
    <property type="match status" value="1"/>
</dbReference>
<gene>
    <name type="primary">UPK2</name>
</gene>
<name>UPK2_BOVIN</name>
<organism>
    <name type="scientific">Bos taurus</name>
    <name type="common">Bovine</name>
    <dbReference type="NCBI Taxonomy" id="9913"/>
    <lineage>
        <taxon>Eukaryota</taxon>
        <taxon>Metazoa</taxon>
        <taxon>Chordata</taxon>
        <taxon>Craniata</taxon>
        <taxon>Vertebrata</taxon>
        <taxon>Euteleostomi</taxon>
        <taxon>Mammalia</taxon>
        <taxon>Eutheria</taxon>
        <taxon>Laurasiatheria</taxon>
        <taxon>Artiodactyla</taxon>
        <taxon>Ruminantia</taxon>
        <taxon>Pecora</taxon>
        <taxon>Bovidae</taxon>
        <taxon>Bovinae</taxon>
        <taxon>Bos</taxon>
    </lineage>
</organism>
<keyword id="KW-1003">Cell membrane</keyword>
<keyword id="KW-0165">Cleavage on pair of basic residues</keyword>
<keyword id="KW-0903">Direct protein sequencing</keyword>
<keyword id="KW-0325">Glycoprotein</keyword>
<keyword id="KW-0472">Membrane</keyword>
<keyword id="KW-1185">Reference proteome</keyword>
<keyword id="KW-0732">Signal</keyword>
<keyword id="KW-0812">Transmembrane</keyword>
<keyword id="KW-1133">Transmembrane helix</keyword>
<evidence type="ECO:0000255" key="1"/>
<evidence type="ECO:0000269" key="2">
    <source>
    </source>
</evidence>
<evidence type="ECO:0000305" key="3"/>